<name>GANOD_GANLU</name>
<protein>
    <recommendedName>
        <fullName>Ganodermin</fullName>
    </recommendedName>
</protein>
<evidence type="ECO:0000269" key="1">
    <source>
    </source>
</evidence>
<evidence type="ECO:0000303" key="2">
    <source>
    </source>
</evidence>
<evidence type="ECO:0000305" key="3"/>
<sequence>AGETHTVMINHAGRGAPKLVVGGKKLS</sequence>
<reference evidence="3" key="1">
    <citation type="journal article" date="2006" name="Peptides">
        <title>Ganodermin, an antifungal protein from fruiting bodies of the medicinal mushroom Ganoderma lucidum.</title>
        <authorList>
            <person name="Wang H."/>
            <person name="Ng T.B."/>
        </authorList>
    </citation>
    <scope>PROTEIN SEQUENCE</scope>
    <scope>FUNCTION</scope>
    <source>
        <tissue evidence="1">Fruiting body</tissue>
    </source>
</reference>
<keyword id="KW-0929">Antimicrobial</keyword>
<keyword id="KW-0903">Direct protein sequencing</keyword>
<keyword id="KW-0295">Fungicide</keyword>
<comment type="function">
    <text evidence="1">Has antifungal activity against B.cinera, F.oxysporum and P.piricola with IC(50) values of 15.2 uM, 12.4 uM and 18.1 uM, respectively. Lacks hemagglutinating activity towards rabbit erythrocytes. Lacks deoxyribonuclease, ribonuclease and protease inhibitory activities.</text>
</comment>
<dbReference type="GO" id="GO:0050832">
    <property type="term" value="P:defense response to fungus"/>
    <property type="evidence" value="ECO:0000314"/>
    <property type="project" value="UniProtKB"/>
</dbReference>
<dbReference type="GO" id="GO:0031640">
    <property type="term" value="P:killing of cells of another organism"/>
    <property type="evidence" value="ECO:0007669"/>
    <property type="project" value="UniProtKB-KW"/>
</dbReference>
<proteinExistence type="evidence at protein level"/>
<feature type="chain" id="PRO_0000252248" description="Ganodermin">
    <location>
        <begin position="1"/>
        <end position="27" status="greater than"/>
    </location>
</feature>
<feature type="non-terminal residue" evidence="2">
    <location>
        <position position="27"/>
    </location>
</feature>
<organism>
    <name type="scientific">Ganoderma lucidum</name>
    <name type="common">Ling zhi medicinal fungus</name>
    <name type="synonym">Bracket fungus</name>
    <dbReference type="NCBI Taxonomy" id="5315"/>
    <lineage>
        <taxon>Eukaryota</taxon>
        <taxon>Fungi</taxon>
        <taxon>Dikarya</taxon>
        <taxon>Basidiomycota</taxon>
        <taxon>Agaricomycotina</taxon>
        <taxon>Agaricomycetes</taxon>
        <taxon>Polyporales</taxon>
        <taxon>Polyporaceae</taxon>
        <taxon>Ganoderma</taxon>
    </lineage>
</organism>
<accession>P84995</accession>